<gene>
    <name type="ordered locus">TP_0502</name>
</gene>
<dbReference type="EMBL" id="AE000520">
    <property type="protein sequence ID" value="AAC65491.1"/>
    <property type="molecule type" value="Genomic_DNA"/>
</dbReference>
<dbReference type="PIR" id="B71317">
    <property type="entry name" value="B71317"/>
</dbReference>
<dbReference type="RefSeq" id="WP_010881951.1">
    <property type="nucleotide sequence ID" value="NC_021490.2"/>
</dbReference>
<dbReference type="SMR" id="O83515"/>
<dbReference type="STRING" id="243276.TP_0502"/>
<dbReference type="EnsemblBacteria" id="AAC65491">
    <property type="protein sequence ID" value="AAC65491"/>
    <property type="gene ID" value="TP_0502"/>
</dbReference>
<dbReference type="KEGG" id="tpa:TP_0502"/>
<dbReference type="KEGG" id="tpw:TPANIC_0502"/>
<dbReference type="eggNOG" id="COG0666">
    <property type="taxonomic scope" value="Bacteria"/>
</dbReference>
<dbReference type="HOGENOM" id="CLU_077687_0_0_12"/>
<dbReference type="OrthoDB" id="368967at2"/>
<dbReference type="Proteomes" id="UP000000811">
    <property type="component" value="Chromosome"/>
</dbReference>
<dbReference type="Gene3D" id="1.25.40.20">
    <property type="entry name" value="Ankyrin repeat-containing domain"/>
    <property type="match status" value="1"/>
</dbReference>
<dbReference type="InterPro" id="IPR002110">
    <property type="entry name" value="Ankyrin_rpt"/>
</dbReference>
<dbReference type="InterPro" id="IPR036770">
    <property type="entry name" value="Ankyrin_rpt-contain_sf"/>
</dbReference>
<dbReference type="InterPro" id="IPR050889">
    <property type="entry name" value="Dendritic_Spine_Reg/Scaffold"/>
</dbReference>
<dbReference type="PANTHER" id="PTHR24166:SF47">
    <property type="entry name" value="M-PHASE PHOSPHOPROTEIN 8"/>
    <property type="match status" value="1"/>
</dbReference>
<dbReference type="PANTHER" id="PTHR24166">
    <property type="entry name" value="ROLLING PEBBLES, ISOFORM B"/>
    <property type="match status" value="1"/>
</dbReference>
<dbReference type="Pfam" id="PF00023">
    <property type="entry name" value="Ank"/>
    <property type="match status" value="1"/>
</dbReference>
<dbReference type="Pfam" id="PF12796">
    <property type="entry name" value="Ank_2"/>
    <property type="match status" value="1"/>
</dbReference>
<dbReference type="SMART" id="SM00248">
    <property type="entry name" value="ANK"/>
    <property type="match status" value="4"/>
</dbReference>
<dbReference type="SUPFAM" id="SSF48403">
    <property type="entry name" value="Ankyrin repeat"/>
    <property type="match status" value="1"/>
</dbReference>
<dbReference type="PROSITE" id="PS50297">
    <property type="entry name" value="ANK_REP_REGION"/>
    <property type="match status" value="1"/>
</dbReference>
<dbReference type="PROSITE" id="PS50088">
    <property type="entry name" value="ANK_REPEAT"/>
    <property type="match status" value="3"/>
</dbReference>
<accession>O83515</accession>
<proteinExistence type="predicted"/>
<organism>
    <name type="scientific">Treponema pallidum (strain Nichols)</name>
    <dbReference type="NCBI Taxonomy" id="243276"/>
    <lineage>
        <taxon>Bacteria</taxon>
        <taxon>Pseudomonadati</taxon>
        <taxon>Spirochaetota</taxon>
        <taxon>Spirochaetia</taxon>
        <taxon>Spirochaetales</taxon>
        <taxon>Treponemataceae</taxon>
        <taxon>Treponema</taxon>
    </lineage>
</organism>
<sequence>MKVVLFYDQGRAHSVAAICEVLCAQGCAVTPHAIEQVWNDTSPCSTPLALVQDATHVFFLYAHEPMRDPAFIFFSGVACGRGMHVLLLATTTEVRDIHVFRDLVFLLEEETFEDFFRVEHERFVRQKKKRVARTALLERGYPCFEENFIATVMDGNIDIVNLFLDAGFSAALKDARGTPVLSLAVREGQDEMAAQLIARGAPVDQLSDDRAYSALMEAAQIGNRTVARLLLHAGADPNVRGSNGQTALVLAVGRKDHVLIRLLMDHGANPYLEDKLGLSAQGYAKLFNDPTLCTLVGV</sequence>
<name>Y502_TREPA</name>
<protein>
    <recommendedName>
        <fullName>Putative ankyrin repeat-containing protein TP_0502</fullName>
    </recommendedName>
</protein>
<keyword id="KW-0040">ANK repeat</keyword>
<keyword id="KW-1185">Reference proteome</keyword>
<keyword id="KW-0677">Repeat</keyword>
<reference key="1">
    <citation type="journal article" date="1998" name="Science">
        <title>Complete genome sequence of Treponema pallidum, the syphilis spirochete.</title>
        <authorList>
            <person name="Fraser C.M."/>
            <person name="Norris S.J."/>
            <person name="Weinstock G.M."/>
            <person name="White O."/>
            <person name="Sutton G.G."/>
            <person name="Dodson R.J."/>
            <person name="Gwinn M.L."/>
            <person name="Hickey E.K."/>
            <person name="Clayton R.A."/>
            <person name="Ketchum K.A."/>
            <person name="Sodergren E."/>
            <person name="Hardham J.M."/>
            <person name="McLeod M.P."/>
            <person name="Salzberg S.L."/>
            <person name="Peterson J.D."/>
            <person name="Khalak H.G."/>
            <person name="Richardson D.L."/>
            <person name="Howell J.K."/>
            <person name="Chidambaram M."/>
            <person name="Utterback T.R."/>
            <person name="McDonald L.A."/>
            <person name="Artiach P."/>
            <person name="Bowman C."/>
            <person name="Cotton M.D."/>
            <person name="Fujii C."/>
            <person name="Garland S.A."/>
            <person name="Hatch B."/>
            <person name="Horst K."/>
            <person name="Roberts K.M."/>
            <person name="Sandusky M."/>
            <person name="Weidman J.F."/>
            <person name="Smith H.O."/>
            <person name="Venter J.C."/>
        </authorList>
    </citation>
    <scope>NUCLEOTIDE SEQUENCE [LARGE SCALE GENOMIC DNA]</scope>
    <source>
        <strain>Nichols</strain>
    </source>
</reference>
<feature type="chain" id="PRO_0000067242" description="Putative ankyrin repeat-containing protein TP_0502">
    <location>
        <begin position="1"/>
        <end position="298"/>
    </location>
</feature>
<feature type="repeat" description="ANK 1">
    <location>
        <begin position="143"/>
        <end position="172"/>
    </location>
</feature>
<feature type="repeat" description="ANK 2">
    <location>
        <begin position="176"/>
        <end position="205"/>
    </location>
</feature>
<feature type="repeat" description="ANK 3">
    <location>
        <begin position="210"/>
        <end position="239"/>
    </location>
</feature>
<feature type="repeat" description="ANK 4">
    <location>
        <begin position="243"/>
        <end position="272"/>
    </location>
</feature>